<proteinExistence type="evidence at protein level"/>
<dbReference type="EMBL" id="CP000964">
    <property type="protein sequence ID" value="ACI11375.1"/>
    <property type="molecule type" value="Genomic_DNA"/>
</dbReference>
<dbReference type="PDB" id="4AWX">
    <property type="method" value="X-ray"/>
    <property type="resolution" value="2.30 A"/>
    <property type="chains" value="B=1-79"/>
</dbReference>
<dbReference type="PDBsum" id="4AWX"/>
<dbReference type="BMRB" id="B5XTS6"/>
<dbReference type="SMR" id="B5XTS6"/>
<dbReference type="TCDB" id="9.A.8.1.10">
    <property type="family name" value="the ferrous iron uptake (feob) family"/>
</dbReference>
<dbReference type="KEGG" id="kpe:KPK_0335"/>
<dbReference type="HOGENOM" id="CLU_189182_0_0_6"/>
<dbReference type="EvolutionaryTrace" id="B5XTS6"/>
<dbReference type="Proteomes" id="UP000001734">
    <property type="component" value="Chromosome"/>
</dbReference>
<dbReference type="GO" id="GO:0003677">
    <property type="term" value="F:DNA binding"/>
    <property type="evidence" value="ECO:0007669"/>
    <property type="project" value="UniProtKB-KW"/>
</dbReference>
<dbReference type="GO" id="GO:0005506">
    <property type="term" value="F:iron ion binding"/>
    <property type="evidence" value="ECO:0007669"/>
    <property type="project" value="UniProtKB-UniRule"/>
</dbReference>
<dbReference type="GO" id="GO:0051536">
    <property type="term" value="F:iron-sulfur cluster binding"/>
    <property type="evidence" value="ECO:0007669"/>
    <property type="project" value="UniProtKB-KW"/>
</dbReference>
<dbReference type="Gene3D" id="1.10.10.10">
    <property type="entry name" value="Winged helix-like DNA-binding domain superfamily/Winged helix DNA-binding domain"/>
    <property type="match status" value="1"/>
</dbReference>
<dbReference type="HAMAP" id="MF_01586">
    <property type="entry name" value="FeoC"/>
    <property type="match status" value="1"/>
</dbReference>
<dbReference type="InterPro" id="IPR023732">
    <property type="entry name" value="FeoC"/>
</dbReference>
<dbReference type="InterPro" id="IPR015102">
    <property type="entry name" value="Tscrpt_reg_HTH_FeoC"/>
</dbReference>
<dbReference type="InterPro" id="IPR036388">
    <property type="entry name" value="WH-like_DNA-bd_sf"/>
</dbReference>
<dbReference type="InterPro" id="IPR036390">
    <property type="entry name" value="WH_DNA-bd_sf"/>
</dbReference>
<dbReference type="NCBIfam" id="NF011960">
    <property type="entry name" value="PRK15431.1"/>
    <property type="match status" value="1"/>
</dbReference>
<dbReference type="Pfam" id="PF09012">
    <property type="entry name" value="FeoC"/>
    <property type="match status" value="1"/>
</dbReference>
<dbReference type="SUPFAM" id="SSF46785">
    <property type="entry name" value="Winged helix' DNA-binding domain"/>
    <property type="match status" value="1"/>
</dbReference>
<evidence type="ECO:0000255" key="1">
    <source>
        <dbReference type="HAMAP-Rule" id="MF_01586"/>
    </source>
</evidence>
<evidence type="ECO:0007829" key="2">
    <source>
        <dbReference type="PDB" id="4AWX"/>
    </source>
</evidence>
<protein>
    <recommendedName>
        <fullName evidence="1">Probable [Fe-S]-dependent transcriptional repressor</fullName>
    </recommendedName>
</protein>
<name>FEOC_KLEP3</name>
<accession>B5XTS6</accession>
<keyword id="KW-0002">3D-structure</keyword>
<keyword id="KW-0238">DNA-binding</keyword>
<keyword id="KW-0408">Iron</keyword>
<keyword id="KW-0411">Iron-sulfur</keyword>
<keyword id="KW-0479">Metal-binding</keyword>
<keyword id="KW-0678">Repressor</keyword>
<keyword id="KW-0804">Transcription</keyword>
<keyword id="KW-0805">Transcription regulation</keyword>
<organism>
    <name type="scientific">Klebsiella pneumoniae (strain 342)</name>
    <dbReference type="NCBI Taxonomy" id="507522"/>
    <lineage>
        <taxon>Bacteria</taxon>
        <taxon>Pseudomonadati</taxon>
        <taxon>Pseudomonadota</taxon>
        <taxon>Gammaproteobacteria</taxon>
        <taxon>Enterobacterales</taxon>
        <taxon>Enterobacteriaceae</taxon>
        <taxon>Klebsiella/Raoultella group</taxon>
        <taxon>Klebsiella</taxon>
        <taxon>Klebsiella pneumoniae complex</taxon>
    </lineage>
</organism>
<reference key="1">
    <citation type="journal article" date="2008" name="PLoS Genet.">
        <title>Complete genome sequence of the N2-fixing broad host range endophyte Klebsiella pneumoniae 342 and virulence predictions verified in mice.</title>
        <authorList>
            <person name="Fouts D.E."/>
            <person name="Tyler H.L."/>
            <person name="DeBoy R.T."/>
            <person name="Daugherty S."/>
            <person name="Ren Q."/>
            <person name="Badger J.H."/>
            <person name="Durkin A.S."/>
            <person name="Huot H."/>
            <person name="Shrivastava S."/>
            <person name="Kothari S."/>
            <person name="Dodson R.J."/>
            <person name="Mohamoud Y."/>
            <person name="Khouri H."/>
            <person name="Roesch L.F.W."/>
            <person name="Krogfelt K.A."/>
            <person name="Struve C."/>
            <person name="Triplett E.W."/>
            <person name="Methe B.A."/>
        </authorList>
    </citation>
    <scope>NUCLEOTIDE SEQUENCE [LARGE SCALE GENOMIC DNA]</scope>
    <source>
        <strain>342</strain>
    </source>
</reference>
<comment type="function">
    <text evidence="1">May function as a transcriptional regulator that controls feoABC expression.</text>
</comment>
<comment type="similarity">
    <text evidence="1">Belongs to the FeoC family.</text>
</comment>
<sequence length="79" mass="8801">MASLMEVRDMLALQGRMEAKQLSARLRTPQPLIDAMLERMEAMGKVVRISETSEGCLSGSCKSCPEGKAACQQEWWALR</sequence>
<feature type="chain" id="PRO_1000201328" description="Probable [Fe-S]-dependent transcriptional repressor">
    <location>
        <begin position="1"/>
        <end position="79"/>
    </location>
</feature>
<feature type="binding site" evidence="1">
    <location>
        <position position="56"/>
    </location>
    <ligand>
        <name>iron-sulfur cluster</name>
        <dbReference type="ChEBI" id="CHEBI:30408"/>
    </ligand>
</feature>
<feature type="binding site" evidence="1">
    <location>
        <position position="61"/>
    </location>
    <ligand>
        <name>iron-sulfur cluster</name>
        <dbReference type="ChEBI" id="CHEBI:30408"/>
    </ligand>
</feature>
<feature type="binding site" evidence="1">
    <location>
        <position position="64"/>
    </location>
    <ligand>
        <name>iron-sulfur cluster</name>
        <dbReference type="ChEBI" id="CHEBI:30408"/>
    </ligand>
</feature>
<feature type="binding site" evidence="1">
    <location>
        <position position="71"/>
    </location>
    <ligand>
        <name>iron-sulfur cluster</name>
        <dbReference type="ChEBI" id="CHEBI:30408"/>
    </ligand>
</feature>
<feature type="helix" evidence="2">
    <location>
        <begin position="4"/>
        <end position="14"/>
    </location>
</feature>
<feature type="helix" evidence="2">
    <location>
        <begin position="19"/>
        <end position="25"/>
    </location>
</feature>
<feature type="helix" evidence="2">
    <location>
        <begin position="30"/>
        <end position="42"/>
    </location>
</feature>
<feature type="strand" evidence="2">
    <location>
        <begin position="45"/>
        <end position="50"/>
    </location>
</feature>
<feature type="strand" evidence="2">
    <location>
        <begin position="74"/>
        <end position="78"/>
    </location>
</feature>
<gene>
    <name evidence="1" type="primary">feoC</name>
    <name type="ordered locus">KPK_0335</name>
</gene>